<dbReference type="EC" id="3.1.11.6" evidence="1"/>
<dbReference type="EMBL" id="CP000901">
    <property type="protein sequence ID" value="ABX86881.1"/>
    <property type="molecule type" value="Genomic_DNA"/>
</dbReference>
<dbReference type="RefSeq" id="WP_002209810.1">
    <property type="nucleotide sequence ID" value="NZ_CP009935.1"/>
</dbReference>
<dbReference type="SMR" id="A9R7Z4"/>
<dbReference type="GeneID" id="57975829"/>
<dbReference type="KEGG" id="ypg:YpAngola_A0410"/>
<dbReference type="PATRIC" id="fig|349746.12.peg.1365"/>
<dbReference type="GO" id="GO:0005737">
    <property type="term" value="C:cytoplasm"/>
    <property type="evidence" value="ECO:0007669"/>
    <property type="project" value="UniProtKB-SubCell"/>
</dbReference>
<dbReference type="GO" id="GO:0009318">
    <property type="term" value="C:exodeoxyribonuclease VII complex"/>
    <property type="evidence" value="ECO:0007669"/>
    <property type="project" value="InterPro"/>
</dbReference>
<dbReference type="GO" id="GO:0008855">
    <property type="term" value="F:exodeoxyribonuclease VII activity"/>
    <property type="evidence" value="ECO:0007669"/>
    <property type="project" value="UniProtKB-UniRule"/>
</dbReference>
<dbReference type="GO" id="GO:0003676">
    <property type="term" value="F:nucleic acid binding"/>
    <property type="evidence" value="ECO:0007669"/>
    <property type="project" value="InterPro"/>
</dbReference>
<dbReference type="GO" id="GO:0006308">
    <property type="term" value="P:DNA catabolic process"/>
    <property type="evidence" value="ECO:0007669"/>
    <property type="project" value="UniProtKB-UniRule"/>
</dbReference>
<dbReference type="CDD" id="cd04489">
    <property type="entry name" value="ExoVII_LU_OBF"/>
    <property type="match status" value="1"/>
</dbReference>
<dbReference type="HAMAP" id="MF_00378">
    <property type="entry name" value="Exonuc_7_L"/>
    <property type="match status" value="1"/>
</dbReference>
<dbReference type="InterPro" id="IPR003753">
    <property type="entry name" value="Exonuc_VII_L"/>
</dbReference>
<dbReference type="InterPro" id="IPR020579">
    <property type="entry name" value="Exonuc_VII_lsu_C"/>
</dbReference>
<dbReference type="InterPro" id="IPR025824">
    <property type="entry name" value="OB-fold_nuc-bd_dom"/>
</dbReference>
<dbReference type="NCBIfam" id="TIGR00237">
    <property type="entry name" value="xseA"/>
    <property type="match status" value="1"/>
</dbReference>
<dbReference type="PANTHER" id="PTHR30008">
    <property type="entry name" value="EXODEOXYRIBONUCLEASE 7 LARGE SUBUNIT"/>
    <property type="match status" value="1"/>
</dbReference>
<dbReference type="PANTHER" id="PTHR30008:SF0">
    <property type="entry name" value="EXODEOXYRIBONUCLEASE 7 LARGE SUBUNIT"/>
    <property type="match status" value="1"/>
</dbReference>
<dbReference type="Pfam" id="PF02601">
    <property type="entry name" value="Exonuc_VII_L"/>
    <property type="match status" value="1"/>
</dbReference>
<dbReference type="Pfam" id="PF13742">
    <property type="entry name" value="tRNA_anti_2"/>
    <property type="match status" value="1"/>
</dbReference>
<reference key="1">
    <citation type="journal article" date="2010" name="J. Bacteriol.">
        <title>Genome sequence of the deep-rooted Yersinia pestis strain Angola reveals new insights into the evolution and pangenome of the plague bacterium.</title>
        <authorList>
            <person name="Eppinger M."/>
            <person name="Worsham P.L."/>
            <person name="Nikolich M.P."/>
            <person name="Riley D.R."/>
            <person name="Sebastian Y."/>
            <person name="Mou S."/>
            <person name="Achtman M."/>
            <person name="Lindler L.E."/>
            <person name="Ravel J."/>
        </authorList>
    </citation>
    <scope>NUCLEOTIDE SEQUENCE [LARGE SCALE GENOMIC DNA]</scope>
    <source>
        <strain>Angola</strain>
    </source>
</reference>
<proteinExistence type="inferred from homology"/>
<feature type="chain" id="PRO_1000122105" description="Exodeoxyribonuclease 7 large subunit">
    <location>
        <begin position="1"/>
        <end position="459"/>
    </location>
</feature>
<comment type="function">
    <text evidence="1">Bidirectionally degrades single-stranded DNA into large acid-insoluble oligonucleotides, which are then degraded further into small acid-soluble oligonucleotides.</text>
</comment>
<comment type="catalytic activity">
    <reaction evidence="1">
        <text>Exonucleolytic cleavage in either 5'- to 3'- or 3'- to 5'-direction to yield nucleoside 5'-phosphates.</text>
        <dbReference type="EC" id="3.1.11.6"/>
    </reaction>
</comment>
<comment type="subunit">
    <text evidence="1">Heterooligomer composed of large and small subunits.</text>
</comment>
<comment type="subcellular location">
    <subcellularLocation>
        <location evidence="1">Cytoplasm</location>
    </subcellularLocation>
</comment>
<comment type="similarity">
    <text evidence="1">Belongs to the XseA family.</text>
</comment>
<accession>A9R7Z4</accession>
<evidence type="ECO:0000255" key="1">
    <source>
        <dbReference type="HAMAP-Rule" id="MF_00378"/>
    </source>
</evidence>
<gene>
    <name evidence="1" type="primary">xseA</name>
    <name type="ordered locus">YpAngola_A0410</name>
</gene>
<protein>
    <recommendedName>
        <fullName evidence="1">Exodeoxyribonuclease 7 large subunit</fullName>
        <ecNumber evidence="1">3.1.11.6</ecNumber>
    </recommendedName>
    <alternativeName>
        <fullName evidence="1">Exodeoxyribonuclease VII large subunit</fullName>
        <shortName evidence="1">Exonuclease VII large subunit</shortName>
    </alternativeName>
</protein>
<keyword id="KW-0963">Cytoplasm</keyword>
<keyword id="KW-0269">Exonuclease</keyword>
<keyword id="KW-0378">Hydrolase</keyword>
<keyword id="KW-0540">Nuclease</keyword>
<organism>
    <name type="scientific">Yersinia pestis bv. Antiqua (strain Angola)</name>
    <dbReference type="NCBI Taxonomy" id="349746"/>
    <lineage>
        <taxon>Bacteria</taxon>
        <taxon>Pseudomonadati</taxon>
        <taxon>Pseudomonadota</taxon>
        <taxon>Gammaproteobacteria</taxon>
        <taxon>Enterobacterales</taxon>
        <taxon>Yersiniaceae</taxon>
        <taxon>Yersinia</taxon>
    </lineage>
</organism>
<sequence>MSQSSASSIFTVSRLNQTVRELLEREMGQIWLTAEISNFSQPASGHWYFTLKDDRAQVRCAMFRNSNRRTTFRPQNGQQVLVRASITLYEPRGDYQLIAESMQPAGDGLLQQQFEQLKQQLAAEGLFDQSHKQPLPHPAKQVGVITSASGAALHDVLHVLQRRDPSLPVIIYPTSVQGVDAPLQIVRAIQLANLRAECDVLIVGRGGGSLEDLWSFNDERVARAIFNSHIPIVSAVGHETDVTIADFVADLRAPTPSAAAELVSRNQIELVRQIQGQQQRMEMAMDYYLAQRNQQFTRLEHRLQQQHPHLRLARQQTLLLKLQRRLEESAQTQIRLLSKRTERLQQRLQQVQPQGQIHRYNQRVQQQEYRLRQAVERQLNGYRQRFGIACSQLEAVSPLATLARGYSVTQTPAGALLKTTKQVQAGDKLTTRLQDGWVESEITQVTVAKKSRQKKVVTQ</sequence>
<name>EX7L_YERPG</name>